<accession>P69808</accession>
<accession>P76525</accession>
<accession>P78264</accession>
<sequence>MSKKLIALCACPMGLAHTFMAAQALEEAAVEAGYEVKIETQGADGIQNRLTAQDIAEATIIIHSVAVTPEDNERFESRDVYEITLQDAIKNAAGIIKEIEEMIASEQQ</sequence>
<keyword id="KW-0002">3D-structure</keyword>
<keyword id="KW-0963">Cytoplasm</keyword>
<keyword id="KW-0418">Kinase</keyword>
<keyword id="KW-0597">Phosphoprotein</keyword>
<keyword id="KW-0598">Phosphotransferase system</keyword>
<keyword id="KW-1185">Reference proteome</keyword>
<keyword id="KW-0762">Sugar transport</keyword>
<keyword id="KW-0808">Transferase</keyword>
<keyword id="KW-0813">Transport</keyword>
<comment type="function">
    <text evidence="1">The phosphoenolpyruvate-dependent sugar phosphotransferase system (sugar PTS), a major carbohydrate active transport system, catalyzes the phosphorylation of incoming sugar substrates concomitantly with their translocation across the cell membrane. The enzyme II FryABC PTS system is involved in fructose transport.</text>
</comment>
<comment type="catalytic activity">
    <reaction evidence="1">
        <text>D-fructose(out) + N(pros)-phospho-L-histidyl-[protein] = D-fructose 1-phosphate(in) + L-histidyl-[protein]</text>
        <dbReference type="Rhea" id="RHEA:49252"/>
        <dbReference type="Rhea" id="RHEA-COMP:9745"/>
        <dbReference type="Rhea" id="RHEA-COMP:9746"/>
        <dbReference type="ChEBI" id="CHEBI:29979"/>
        <dbReference type="ChEBI" id="CHEBI:37721"/>
        <dbReference type="ChEBI" id="CHEBI:58674"/>
        <dbReference type="ChEBI" id="CHEBI:64837"/>
        <dbReference type="EC" id="2.7.1.202"/>
    </reaction>
</comment>
<comment type="subcellular location">
    <subcellularLocation>
        <location evidence="3">Cytoplasm</location>
    </subcellularLocation>
</comment>
<comment type="domain">
    <text evidence="2">The PTS EIIB type-2 domain is phosphorylated by phospho-EIIA on a cysteinyl residue. Then, it transfers the phosphoryl group to the sugar substrate concomitantly with the sugar uptake processed by the PTS EIIC type-2 domain.</text>
</comment>
<protein>
    <recommendedName>
        <fullName evidence="1">PTS system fructose-like EIIB component 1</fullName>
        <ecNumber evidence="1">2.7.1.202</ecNumber>
    </recommendedName>
    <alternativeName>
        <fullName evidence="1">Fructose-like phosphotransferase enzyme IIB component 1</fullName>
    </alternativeName>
</protein>
<proteinExistence type="evidence at protein level"/>
<organism>
    <name type="scientific">Escherichia coli (strain K12)</name>
    <dbReference type="NCBI Taxonomy" id="83333"/>
    <lineage>
        <taxon>Bacteria</taxon>
        <taxon>Pseudomonadati</taxon>
        <taxon>Pseudomonadota</taxon>
        <taxon>Gammaproteobacteria</taxon>
        <taxon>Enterobacterales</taxon>
        <taxon>Enterobacteriaceae</taxon>
        <taxon>Escherichia</taxon>
    </lineage>
</organism>
<feature type="chain" id="PRO_0000186700" description="PTS system fructose-like EIIB component 1">
    <location>
        <begin position="1"/>
        <end position="108"/>
    </location>
</feature>
<feature type="domain" description="PTS EIIB type-2" evidence="2">
    <location>
        <begin position="1"/>
        <end position="104"/>
    </location>
</feature>
<feature type="active site" description="Phosphocysteine intermediate" evidence="1 3">
    <location>
        <position position="11"/>
    </location>
</feature>
<feature type="modified residue" description="Phosphocysteine; by EIIA" evidence="2">
    <location>
        <position position="11"/>
    </location>
</feature>
<feature type="strand" evidence="4">
    <location>
        <begin position="4"/>
        <end position="13"/>
    </location>
</feature>
<feature type="helix" evidence="4">
    <location>
        <begin position="15"/>
        <end position="31"/>
    </location>
</feature>
<feature type="strand" evidence="4">
    <location>
        <begin position="33"/>
        <end position="42"/>
    </location>
</feature>
<feature type="strand" evidence="4">
    <location>
        <begin position="45"/>
        <end position="48"/>
    </location>
</feature>
<feature type="helix" evidence="4">
    <location>
        <begin position="52"/>
        <end position="57"/>
    </location>
</feature>
<feature type="strand" evidence="4">
    <location>
        <begin position="59"/>
        <end position="67"/>
    </location>
</feature>
<feature type="helix" evidence="4">
    <location>
        <begin position="72"/>
        <end position="75"/>
    </location>
</feature>
<feature type="strand" evidence="4">
    <location>
        <begin position="80"/>
        <end position="84"/>
    </location>
</feature>
<feature type="helix" evidence="4">
    <location>
        <begin position="87"/>
        <end position="90"/>
    </location>
</feature>
<feature type="helix" evidence="4">
    <location>
        <begin position="92"/>
        <end position="107"/>
    </location>
</feature>
<gene>
    <name type="primary">fryB</name>
    <name type="synonym">ypdH</name>
    <name type="ordered locus">b2387</name>
    <name type="ordered locus">JW5389</name>
</gene>
<evidence type="ECO:0000250" key="1">
    <source>
        <dbReference type="UniProtKB" id="P20966"/>
    </source>
</evidence>
<evidence type="ECO:0000255" key="2">
    <source>
        <dbReference type="PROSITE-ProRule" id="PRU00422"/>
    </source>
</evidence>
<evidence type="ECO:0000305" key="3"/>
<evidence type="ECO:0007829" key="4">
    <source>
        <dbReference type="PDB" id="2KYR"/>
    </source>
</evidence>
<reference key="1">
    <citation type="journal article" date="1997" name="DNA Res.">
        <title>Construction of a contiguous 874-kb sequence of the Escherichia coli-K12 genome corresponding to 50.0-68.8 min on the linkage map and analysis of its sequence features.</title>
        <authorList>
            <person name="Yamamoto Y."/>
            <person name="Aiba H."/>
            <person name="Baba T."/>
            <person name="Hayashi K."/>
            <person name="Inada T."/>
            <person name="Isono K."/>
            <person name="Itoh T."/>
            <person name="Kimura S."/>
            <person name="Kitagawa M."/>
            <person name="Makino K."/>
            <person name="Miki T."/>
            <person name="Mitsuhashi N."/>
            <person name="Mizobuchi K."/>
            <person name="Mori H."/>
            <person name="Nakade S."/>
            <person name="Nakamura Y."/>
            <person name="Nashimoto H."/>
            <person name="Oshima T."/>
            <person name="Oyama S."/>
            <person name="Saito N."/>
            <person name="Sampei G."/>
            <person name="Satoh Y."/>
            <person name="Sivasundaram S."/>
            <person name="Tagami H."/>
            <person name="Takahashi H."/>
            <person name="Takeda J."/>
            <person name="Takemoto K."/>
            <person name="Uehara K."/>
            <person name="Wada C."/>
            <person name="Yamagata S."/>
            <person name="Horiuchi T."/>
        </authorList>
    </citation>
    <scope>NUCLEOTIDE SEQUENCE [LARGE SCALE GENOMIC DNA]</scope>
    <source>
        <strain>K12 / W3110 / ATCC 27325 / DSM 5911</strain>
    </source>
</reference>
<reference key="2">
    <citation type="journal article" date="1997" name="Science">
        <title>The complete genome sequence of Escherichia coli K-12.</title>
        <authorList>
            <person name="Blattner F.R."/>
            <person name="Plunkett G. III"/>
            <person name="Bloch C.A."/>
            <person name="Perna N.T."/>
            <person name="Burland V."/>
            <person name="Riley M."/>
            <person name="Collado-Vides J."/>
            <person name="Glasner J.D."/>
            <person name="Rode C.K."/>
            <person name="Mayhew G.F."/>
            <person name="Gregor J."/>
            <person name="Davis N.W."/>
            <person name="Kirkpatrick H.A."/>
            <person name="Goeden M.A."/>
            <person name="Rose D.J."/>
            <person name="Mau B."/>
            <person name="Shao Y."/>
        </authorList>
    </citation>
    <scope>NUCLEOTIDE SEQUENCE [LARGE SCALE GENOMIC DNA]</scope>
    <source>
        <strain>K12 / MG1655 / ATCC 47076</strain>
    </source>
</reference>
<reference key="3">
    <citation type="journal article" date="2006" name="Mol. Syst. Biol.">
        <title>Highly accurate genome sequences of Escherichia coli K-12 strains MG1655 and W3110.</title>
        <authorList>
            <person name="Hayashi K."/>
            <person name="Morooka N."/>
            <person name="Yamamoto Y."/>
            <person name="Fujita K."/>
            <person name="Isono K."/>
            <person name="Choi S."/>
            <person name="Ohtsubo E."/>
            <person name="Baba T."/>
            <person name="Wanner B.L."/>
            <person name="Mori H."/>
            <person name="Horiuchi T."/>
        </authorList>
    </citation>
    <scope>NUCLEOTIDE SEQUENCE [LARGE SCALE GENOMIC DNA]</scope>
    <source>
        <strain>K12 / W3110 / ATCC 27325 / DSM 5911</strain>
    </source>
</reference>
<reference key="4">
    <citation type="submission" date="2010-06" db="PDB data bank">
        <title>Solution structure of Enzyme IIB subunit of PTS system from Escherichia coli K12, Northeast structural genomics consortium target ER315/Ontario center for structural proteomics target ec0544.</title>
        <authorList>
            <person name="Wu B."/>
            <person name="Yee A."/>
            <person name="Gutmanas A."/>
            <person name="Semest A."/>
            <person name="Arrowsmith C.H."/>
        </authorList>
    </citation>
    <scope>STRUCTURE BY NMR</scope>
</reference>
<dbReference type="EC" id="2.7.1.202" evidence="1"/>
<dbReference type="EMBL" id="U00096">
    <property type="protein sequence ID" value="AAC75446.1"/>
    <property type="molecule type" value="Genomic_DNA"/>
</dbReference>
<dbReference type="EMBL" id="AP009048">
    <property type="protein sequence ID" value="BAA16257.2"/>
    <property type="molecule type" value="Genomic_DNA"/>
</dbReference>
<dbReference type="PIR" id="H65012">
    <property type="entry name" value="H65012"/>
</dbReference>
<dbReference type="RefSeq" id="NP_416888.1">
    <property type="nucleotide sequence ID" value="NC_000913.3"/>
</dbReference>
<dbReference type="RefSeq" id="WP_000038456.1">
    <property type="nucleotide sequence ID" value="NZ_STEB01000008.1"/>
</dbReference>
<dbReference type="PDB" id="2KYR">
    <property type="method" value="NMR"/>
    <property type="chains" value="A=1-108"/>
</dbReference>
<dbReference type="PDBsum" id="2KYR"/>
<dbReference type="BMRB" id="P69808"/>
<dbReference type="SMR" id="P69808"/>
<dbReference type="BioGRID" id="4260782">
    <property type="interactions" value="26"/>
</dbReference>
<dbReference type="FunCoup" id="P69808">
    <property type="interactions" value="28"/>
</dbReference>
<dbReference type="STRING" id="511145.b2387"/>
<dbReference type="TCDB" id="4.A.2.1.11">
    <property type="family name" value="the pts fructose-mannitol (fru) family"/>
</dbReference>
<dbReference type="jPOST" id="P69808"/>
<dbReference type="PaxDb" id="511145-b2387"/>
<dbReference type="EnsemblBacteria" id="AAC75446">
    <property type="protein sequence ID" value="AAC75446"/>
    <property type="gene ID" value="b2387"/>
</dbReference>
<dbReference type="GeneID" id="949087"/>
<dbReference type="KEGG" id="ecj:JW5389"/>
<dbReference type="KEGG" id="eco:b2387"/>
<dbReference type="KEGG" id="ecoc:C3026_13270"/>
<dbReference type="PATRIC" id="fig|1411691.4.peg.4341"/>
<dbReference type="EchoBASE" id="EB3907"/>
<dbReference type="eggNOG" id="COG1445">
    <property type="taxonomic scope" value="Bacteria"/>
</dbReference>
<dbReference type="HOGENOM" id="CLU_013155_2_1_6"/>
<dbReference type="InParanoid" id="P69808"/>
<dbReference type="OMA" id="IAVCACP"/>
<dbReference type="OrthoDB" id="9782569at2"/>
<dbReference type="PhylomeDB" id="P69808"/>
<dbReference type="BioCyc" id="EcoCyc:G7250-MONOMER"/>
<dbReference type="EvolutionaryTrace" id="P69808"/>
<dbReference type="PRO" id="PR:P69808"/>
<dbReference type="Proteomes" id="UP000000625">
    <property type="component" value="Chromosome"/>
</dbReference>
<dbReference type="GO" id="GO:0005737">
    <property type="term" value="C:cytoplasm"/>
    <property type="evidence" value="ECO:0007669"/>
    <property type="project" value="UniProtKB-SubCell"/>
</dbReference>
<dbReference type="GO" id="GO:0016301">
    <property type="term" value="F:kinase activity"/>
    <property type="evidence" value="ECO:0007669"/>
    <property type="project" value="UniProtKB-KW"/>
</dbReference>
<dbReference type="GO" id="GO:0022877">
    <property type="term" value="F:protein-N(PI)-phosphohistidine-fructose phosphotransferase system transporter activity"/>
    <property type="evidence" value="ECO:0007669"/>
    <property type="project" value="InterPro"/>
</dbReference>
<dbReference type="GO" id="GO:0090582">
    <property type="term" value="F:protein-phosphocysteine-D-fructose-phosphotransferase system transporter activity"/>
    <property type="evidence" value="ECO:0000250"/>
    <property type="project" value="UniProtKB"/>
</dbReference>
<dbReference type="GO" id="GO:0009401">
    <property type="term" value="P:phosphoenolpyruvate-dependent sugar phosphotransferase system"/>
    <property type="evidence" value="ECO:0000250"/>
    <property type="project" value="UniProtKB"/>
</dbReference>
<dbReference type="CDD" id="cd05569">
    <property type="entry name" value="PTS_IIB_fructose"/>
    <property type="match status" value="1"/>
</dbReference>
<dbReference type="FunFam" id="3.40.50.2300:FF:000092">
    <property type="entry name" value="Fructose-like phosphotransferase enzyme IIB component 1"/>
    <property type="match status" value="1"/>
</dbReference>
<dbReference type="Gene3D" id="3.40.50.2300">
    <property type="match status" value="1"/>
</dbReference>
<dbReference type="InterPro" id="IPR050864">
    <property type="entry name" value="Bacterial_PTS_Sugar_Transport"/>
</dbReference>
<dbReference type="InterPro" id="IPR036095">
    <property type="entry name" value="PTS_EIIB-like_sf"/>
</dbReference>
<dbReference type="InterPro" id="IPR013011">
    <property type="entry name" value="PTS_EIIB_2"/>
</dbReference>
<dbReference type="InterPro" id="IPR003501">
    <property type="entry name" value="PTS_EIIB_2/3"/>
</dbReference>
<dbReference type="InterPro" id="IPR003353">
    <property type="entry name" value="PTS_IIB_fruc"/>
</dbReference>
<dbReference type="NCBIfam" id="TIGR00829">
    <property type="entry name" value="FRU"/>
    <property type="match status" value="1"/>
</dbReference>
<dbReference type="PANTHER" id="PTHR30505">
    <property type="entry name" value="FRUCTOSE-LIKE PERMEASE"/>
    <property type="match status" value="1"/>
</dbReference>
<dbReference type="PANTHER" id="PTHR30505:SF0">
    <property type="entry name" value="FRUCTOSE-LIKE PTS SYSTEM EIIBC COMPONENT-RELATED"/>
    <property type="match status" value="1"/>
</dbReference>
<dbReference type="Pfam" id="PF02302">
    <property type="entry name" value="PTS_IIB"/>
    <property type="match status" value="1"/>
</dbReference>
<dbReference type="SUPFAM" id="SSF52794">
    <property type="entry name" value="PTS system IIB component-like"/>
    <property type="match status" value="1"/>
</dbReference>
<dbReference type="PROSITE" id="PS51099">
    <property type="entry name" value="PTS_EIIB_TYPE_2"/>
    <property type="match status" value="1"/>
</dbReference>
<name>PTFB1_ECOLI</name>